<dbReference type="EMBL" id="L42023">
    <property type="protein sequence ID" value="AAC23277.1"/>
    <property type="molecule type" value="Genomic_DNA"/>
</dbReference>
<dbReference type="PIR" id="E64133">
    <property type="entry name" value="E64133"/>
</dbReference>
<dbReference type="RefSeq" id="NP_439772.1">
    <property type="nucleotide sequence ID" value="NC_000907.1"/>
</dbReference>
<dbReference type="SMR" id="P45281"/>
<dbReference type="STRING" id="71421.HI_1630"/>
<dbReference type="EnsemblBacteria" id="AAC23277">
    <property type="protein sequence ID" value="AAC23277"/>
    <property type="gene ID" value="HI_1630"/>
</dbReference>
<dbReference type="KEGG" id="hin:HI_1630"/>
<dbReference type="PATRIC" id="fig|71421.8.peg.1705"/>
<dbReference type="eggNOG" id="COG1825">
    <property type="taxonomic scope" value="Bacteria"/>
</dbReference>
<dbReference type="HOGENOM" id="CLU_137946_0_0_6"/>
<dbReference type="OrthoDB" id="9806411at2"/>
<dbReference type="PhylomeDB" id="P45281"/>
<dbReference type="BioCyc" id="HINF71421:G1GJ1-1643-MONOMER"/>
<dbReference type="Proteomes" id="UP000000579">
    <property type="component" value="Chromosome"/>
</dbReference>
<dbReference type="GO" id="GO:0022625">
    <property type="term" value="C:cytosolic large ribosomal subunit"/>
    <property type="evidence" value="ECO:0000318"/>
    <property type="project" value="GO_Central"/>
</dbReference>
<dbReference type="GO" id="GO:0008097">
    <property type="term" value="F:5S rRNA binding"/>
    <property type="evidence" value="ECO:0000318"/>
    <property type="project" value="GO_Central"/>
</dbReference>
<dbReference type="GO" id="GO:0003735">
    <property type="term" value="F:structural constituent of ribosome"/>
    <property type="evidence" value="ECO:0007669"/>
    <property type="project" value="InterPro"/>
</dbReference>
<dbReference type="GO" id="GO:0006412">
    <property type="term" value="P:translation"/>
    <property type="evidence" value="ECO:0000318"/>
    <property type="project" value="GO_Central"/>
</dbReference>
<dbReference type="CDD" id="cd00495">
    <property type="entry name" value="Ribosomal_L25_TL5_CTC"/>
    <property type="match status" value="1"/>
</dbReference>
<dbReference type="FunFam" id="2.40.240.10:FF:000002">
    <property type="entry name" value="50S ribosomal protein L25"/>
    <property type="match status" value="1"/>
</dbReference>
<dbReference type="Gene3D" id="2.40.240.10">
    <property type="entry name" value="Ribosomal Protein L25, Chain P"/>
    <property type="match status" value="1"/>
</dbReference>
<dbReference type="HAMAP" id="MF_01336">
    <property type="entry name" value="Ribosomal_bL25"/>
    <property type="match status" value="1"/>
</dbReference>
<dbReference type="InterPro" id="IPR020056">
    <property type="entry name" value="Rbsml_bL25/Gln-tRNA_synth_N"/>
</dbReference>
<dbReference type="InterPro" id="IPR011035">
    <property type="entry name" value="Ribosomal_bL25/Gln-tRNA_synth"/>
</dbReference>
<dbReference type="InterPro" id="IPR020055">
    <property type="entry name" value="Ribosomal_bL25_short"/>
</dbReference>
<dbReference type="InterPro" id="IPR029751">
    <property type="entry name" value="Ribosomal_L25_dom"/>
</dbReference>
<dbReference type="InterPro" id="IPR020930">
    <property type="entry name" value="Ribosomal_uL5_bac-type"/>
</dbReference>
<dbReference type="NCBIfam" id="NF004612">
    <property type="entry name" value="PRK05943.1"/>
    <property type="match status" value="1"/>
</dbReference>
<dbReference type="PANTHER" id="PTHR33284">
    <property type="entry name" value="RIBOSOMAL PROTEIN L25/GLN-TRNA SYNTHETASE, ANTI-CODON-BINDING DOMAIN-CONTAINING PROTEIN"/>
    <property type="match status" value="1"/>
</dbReference>
<dbReference type="PANTHER" id="PTHR33284:SF1">
    <property type="entry name" value="RIBOSOMAL PROTEIN L25_GLN-TRNA SYNTHETASE, ANTI-CODON-BINDING DOMAIN-CONTAINING PROTEIN"/>
    <property type="match status" value="1"/>
</dbReference>
<dbReference type="Pfam" id="PF01386">
    <property type="entry name" value="Ribosomal_L25p"/>
    <property type="match status" value="1"/>
</dbReference>
<dbReference type="SUPFAM" id="SSF50715">
    <property type="entry name" value="Ribosomal protein L25-like"/>
    <property type="match status" value="1"/>
</dbReference>
<comment type="function">
    <text evidence="1">This is one of the proteins that binds to the 5S RNA in the ribosome where it forms part of the central protuberance.</text>
</comment>
<comment type="subunit">
    <text evidence="1">Part of the 50S ribosomal subunit; part of the 5S rRNA/L5/L18/L25 subcomplex. Contacts the 5S rRNA. Binds to the 5S rRNA independently of L5 and L18.</text>
</comment>
<comment type="similarity">
    <text evidence="1">Belongs to the bacterial ribosomal protein bL25 family.</text>
</comment>
<evidence type="ECO:0000255" key="1">
    <source>
        <dbReference type="HAMAP-Rule" id="MF_01336"/>
    </source>
</evidence>
<evidence type="ECO:0000305" key="2"/>
<name>RL25_HAEIN</name>
<accession>P45281</accession>
<gene>
    <name evidence="1" type="primary">rplY</name>
    <name type="synonym">rpl25</name>
    <name type="ordered locus">HI_1630</name>
</gene>
<keyword id="KW-1185">Reference proteome</keyword>
<keyword id="KW-0687">Ribonucleoprotein</keyword>
<keyword id="KW-0689">Ribosomal protein</keyword>
<keyword id="KW-0694">RNA-binding</keyword>
<keyword id="KW-0699">rRNA-binding</keyword>
<sequence>MAFKFNAEVRTAQGKGASRRLRHNGQIPAIVYGGSEEPVSIILNHDELNNAQAHESFYSEVITLVVEGKEVAVKVQAMQRHPFKPKLVHIDFKRA</sequence>
<feature type="chain" id="PRO_0000181484" description="Large ribosomal subunit protein bL25">
    <location>
        <begin position="1"/>
        <end position="95"/>
    </location>
</feature>
<organism>
    <name type="scientific">Haemophilus influenzae (strain ATCC 51907 / DSM 11121 / KW20 / Rd)</name>
    <dbReference type="NCBI Taxonomy" id="71421"/>
    <lineage>
        <taxon>Bacteria</taxon>
        <taxon>Pseudomonadati</taxon>
        <taxon>Pseudomonadota</taxon>
        <taxon>Gammaproteobacteria</taxon>
        <taxon>Pasteurellales</taxon>
        <taxon>Pasteurellaceae</taxon>
        <taxon>Haemophilus</taxon>
    </lineage>
</organism>
<reference key="1">
    <citation type="journal article" date="1995" name="Science">
        <title>Whole-genome random sequencing and assembly of Haemophilus influenzae Rd.</title>
        <authorList>
            <person name="Fleischmann R.D."/>
            <person name="Adams M.D."/>
            <person name="White O."/>
            <person name="Clayton R.A."/>
            <person name="Kirkness E.F."/>
            <person name="Kerlavage A.R."/>
            <person name="Bult C.J."/>
            <person name="Tomb J.-F."/>
            <person name="Dougherty B.A."/>
            <person name="Merrick J.M."/>
            <person name="McKenney K."/>
            <person name="Sutton G.G."/>
            <person name="FitzHugh W."/>
            <person name="Fields C.A."/>
            <person name="Gocayne J.D."/>
            <person name="Scott J.D."/>
            <person name="Shirley R."/>
            <person name="Liu L.-I."/>
            <person name="Glodek A."/>
            <person name="Kelley J.M."/>
            <person name="Weidman J.F."/>
            <person name="Phillips C.A."/>
            <person name="Spriggs T."/>
            <person name="Hedblom E."/>
            <person name="Cotton M.D."/>
            <person name="Utterback T.R."/>
            <person name="Hanna M.C."/>
            <person name="Nguyen D.T."/>
            <person name="Saudek D.M."/>
            <person name="Brandon R.C."/>
            <person name="Fine L.D."/>
            <person name="Fritchman J.L."/>
            <person name="Fuhrmann J.L."/>
            <person name="Geoghagen N.S.M."/>
            <person name="Gnehm C.L."/>
            <person name="McDonald L.A."/>
            <person name="Small K.V."/>
            <person name="Fraser C.M."/>
            <person name="Smith H.O."/>
            <person name="Venter J.C."/>
        </authorList>
    </citation>
    <scope>NUCLEOTIDE SEQUENCE [LARGE SCALE GENOMIC DNA]</scope>
    <source>
        <strain>ATCC 51907 / DSM 11121 / KW20 / Rd</strain>
    </source>
</reference>
<protein>
    <recommendedName>
        <fullName evidence="1">Large ribosomal subunit protein bL25</fullName>
    </recommendedName>
    <alternativeName>
        <fullName evidence="2">50S ribosomal protein L25</fullName>
    </alternativeName>
</protein>
<proteinExistence type="inferred from homology"/>